<proteinExistence type="inferred from homology"/>
<evidence type="ECO:0000255" key="1">
    <source>
        <dbReference type="HAMAP-Rule" id="MF_00728"/>
    </source>
</evidence>
<gene>
    <name evidence="1" type="primary">ezrA</name>
    <name type="ordered locus">Sez_0770</name>
</gene>
<comment type="function">
    <text evidence="1">Negative regulator of FtsZ ring formation; modulates the frequency and position of FtsZ ring formation. Inhibits FtsZ ring formation at polar sites. Interacts either with FtsZ or with one of its binding partners to promote depolymerization.</text>
</comment>
<comment type="subcellular location">
    <subcellularLocation>
        <location evidence="1">Cell membrane</location>
        <topology evidence="1">Single-pass membrane protein</topology>
    </subcellularLocation>
    <text evidence="1">Colocalized with FtsZ to the nascent septal site.</text>
</comment>
<comment type="similarity">
    <text evidence="1">Belongs to the EzrA family.</text>
</comment>
<name>EZRA_STREM</name>
<feature type="chain" id="PRO_1000132707" description="Septation ring formation regulator EzrA">
    <location>
        <begin position="1"/>
        <end position="574"/>
    </location>
</feature>
<feature type="topological domain" description="Extracellular" evidence="1">
    <location>
        <begin position="1"/>
        <end position="7"/>
    </location>
</feature>
<feature type="transmembrane region" description="Helical" evidence="1">
    <location>
        <begin position="8"/>
        <end position="26"/>
    </location>
</feature>
<feature type="topological domain" description="Cytoplasmic" evidence="1">
    <location>
        <begin position="27"/>
        <end position="574"/>
    </location>
</feature>
<feature type="coiled-coil region" evidence="1">
    <location>
        <begin position="102"/>
        <end position="131"/>
    </location>
</feature>
<feature type="coiled-coil region" evidence="1">
    <location>
        <begin position="161"/>
        <end position="190"/>
    </location>
</feature>
<feature type="coiled-coil region" evidence="1">
    <location>
        <begin position="276"/>
        <end position="379"/>
    </location>
</feature>
<feature type="coiled-coil region" evidence="1">
    <location>
        <begin position="459"/>
        <end position="493"/>
    </location>
</feature>
<reference key="1">
    <citation type="journal article" date="2008" name="PLoS ONE">
        <title>Genome sequence of a lancefield group C Streptococcus zooepidemicus strain causing epidemic nephritis: new information about an old disease.</title>
        <authorList>
            <person name="Beres S.B."/>
            <person name="Sesso R."/>
            <person name="Pinto S.W.L."/>
            <person name="Hoe N.P."/>
            <person name="Porcella S.F."/>
            <person name="Deleo F.R."/>
            <person name="Musser J.M."/>
        </authorList>
    </citation>
    <scope>NUCLEOTIDE SEQUENCE [LARGE SCALE GENOMIC DNA]</scope>
    <source>
        <strain>MGCS10565</strain>
    </source>
</reference>
<organism>
    <name type="scientific">Streptococcus equi subsp. zooepidemicus (strain MGCS10565)</name>
    <dbReference type="NCBI Taxonomy" id="552526"/>
    <lineage>
        <taxon>Bacteria</taxon>
        <taxon>Bacillati</taxon>
        <taxon>Bacillota</taxon>
        <taxon>Bacilli</taxon>
        <taxon>Lactobacillales</taxon>
        <taxon>Streptococcaceae</taxon>
        <taxon>Streptococcus</taxon>
    </lineage>
</organism>
<accession>B4U2B4</accession>
<protein>
    <recommendedName>
        <fullName evidence="1">Septation ring formation regulator EzrA</fullName>
    </recommendedName>
</protein>
<sequence>MSSGLILLIVAIVLLVIIAYLVGVIIRKRNDTLITSLEERKQALFGLPVNDEIEEVKSLHLIGQSQTSFREWNQKWVDLTLNTFTDIEKHIFEAEHLNDTFNFIRAKHEINSVESQLNLVEEDITAIREALGILKEQEEKNSARVTHALDLYEKLQASVAENEDNFGSTMAEIEKQMKNIEAEFSQFVALNSSGDPVEAAEVLDKAEEHTIALGQITEQIPAIVAKLEDDFPDQLDDLETGYRRLLEENYHFPEKNIEARFQEIRESIRANSSELVTLDLDRARDENTHIQERIDSLYELFEREIAAYKVVAKNSKILPRYLAHAKHNNEQLKHEIARLSRKYILSENEGLNIKAFDKDLKDIEDNVLEIAEAFDQQEKPFSELQLILDRSIKTLASVESGQMDVFAAVKDIEKIESQARQHLEIYVTQLHMIKRYMEKRNLPGIPQDFLSTFFTTSSQLEALMDELSRGRINIEAVSRLSEVATAAIANLEELTYQVVQHATLTEQLLQYSNRYRSFEAGVQNSFEHALKLFEVDNDYQASFDEISYALETVEPGVTERFVNSYEKTRERIRF</sequence>
<keyword id="KW-0131">Cell cycle</keyword>
<keyword id="KW-0132">Cell division</keyword>
<keyword id="KW-1003">Cell membrane</keyword>
<keyword id="KW-0175">Coiled coil</keyword>
<keyword id="KW-0472">Membrane</keyword>
<keyword id="KW-0717">Septation</keyword>
<keyword id="KW-0812">Transmembrane</keyword>
<keyword id="KW-1133">Transmembrane helix</keyword>
<dbReference type="EMBL" id="CP001129">
    <property type="protein sequence ID" value="ACG62131.1"/>
    <property type="molecule type" value="Genomic_DNA"/>
</dbReference>
<dbReference type="RefSeq" id="WP_012515405.1">
    <property type="nucleotide sequence ID" value="NC_011134.1"/>
</dbReference>
<dbReference type="SMR" id="B4U2B4"/>
<dbReference type="KEGG" id="sez:Sez_0770"/>
<dbReference type="HOGENOM" id="CLU_034079_2_0_9"/>
<dbReference type="Proteomes" id="UP000001873">
    <property type="component" value="Chromosome"/>
</dbReference>
<dbReference type="GO" id="GO:0005886">
    <property type="term" value="C:plasma membrane"/>
    <property type="evidence" value="ECO:0007669"/>
    <property type="project" value="UniProtKB-SubCell"/>
</dbReference>
<dbReference type="GO" id="GO:0005940">
    <property type="term" value="C:septin ring"/>
    <property type="evidence" value="ECO:0007669"/>
    <property type="project" value="InterPro"/>
</dbReference>
<dbReference type="GO" id="GO:0000917">
    <property type="term" value="P:division septum assembly"/>
    <property type="evidence" value="ECO:0007669"/>
    <property type="project" value="UniProtKB-KW"/>
</dbReference>
<dbReference type="GO" id="GO:0000921">
    <property type="term" value="P:septin ring assembly"/>
    <property type="evidence" value="ECO:0007669"/>
    <property type="project" value="InterPro"/>
</dbReference>
<dbReference type="HAMAP" id="MF_00728">
    <property type="entry name" value="EzrA"/>
    <property type="match status" value="1"/>
</dbReference>
<dbReference type="InterPro" id="IPR010379">
    <property type="entry name" value="EzrA"/>
</dbReference>
<dbReference type="NCBIfam" id="NF003407">
    <property type="entry name" value="PRK04778.1-1"/>
    <property type="match status" value="1"/>
</dbReference>
<dbReference type="NCBIfam" id="NF003410">
    <property type="entry name" value="PRK04778.1-4"/>
    <property type="match status" value="1"/>
</dbReference>
<dbReference type="Pfam" id="PF06160">
    <property type="entry name" value="EzrA"/>
    <property type="match status" value="1"/>
</dbReference>